<name>DEFB1_PIG</name>
<comment type="function">
    <text evidence="2">Has bactericidal activity. May act as a ligand for C-C chemokine receptor CCR6. Positively regulates the sperm motility and bactericidal activity in a CCR6-dependent manner. Binds to CCR6 and triggers Ca2+ mobilization in the sperm which is important for its motility.</text>
</comment>
<comment type="subunit">
    <text evidence="2">Monomer. Homodimer.</text>
</comment>
<comment type="subcellular location">
    <subcellularLocation>
        <location evidence="2">Secreted</location>
    </subcellularLocation>
    <subcellularLocation>
        <location evidence="2">Membrane</location>
    </subcellularLocation>
    <text evidence="2">Associates with tumor cell membrane-derived microvesicles.</text>
</comment>
<comment type="similarity">
    <text evidence="4">Belongs to the beta-defensin family.</text>
</comment>
<evidence type="ECO:0000250" key="1"/>
<evidence type="ECO:0000250" key="2">
    <source>
        <dbReference type="UniProtKB" id="P60022"/>
    </source>
</evidence>
<evidence type="ECO:0000255" key="3"/>
<evidence type="ECO:0000305" key="4"/>
<gene>
    <name type="primary">DEFB1</name>
</gene>
<reference key="1">
    <citation type="journal article" date="1998" name="FEBS Lett.">
        <title>Molecular cloning and tissue expression of porcine beta-defensin-1.</title>
        <authorList>
            <person name="Zhang G."/>
            <person name="Wu H."/>
            <person name="Shi J."/>
            <person name="Ganz T."/>
            <person name="Ross C."/>
            <person name="Blecha F."/>
        </authorList>
    </citation>
    <scope>NUCLEOTIDE SEQUENCE [MRNA]</scope>
</reference>
<reference key="2">
    <citation type="journal article" date="1999" name="J. Biol. Chem.">
        <title>Cloning and characterization of the gene for a new epithelial beta-defensin. Genomic structure, chromosomal localization, and evidence for its constitutive expression.</title>
        <authorList>
            <person name="Zhang G."/>
            <person name="Hiraiwa H."/>
            <person name="Yasue H."/>
            <person name="Wu H."/>
            <person name="Ross C.R."/>
            <person name="Troyer D."/>
            <person name="Blecha F."/>
        </authorList>
    </citation>
    <scope>NUCLEOTIDE SEQUENCE [GENOMIC DNA]</scope>
</reference>
<keyword id="KW-0044">Antibiotic</keyword>
<keyword id="KW-0929">Antimicrobial</keyword>
<keyword id="KW-0211">Defensin</keyword>
<keyword id="KW-1015">Disulfide bond</keyword>
<keyword id="KW-0472">Membrane</keyword>
<keyword id="KW-1185">Reference proteome</keyword>
<keyword id="KW-0964">Secreted</keyword>
<keyword id="KW-0732">Signal</keyword>
<organism>
    <name type="scientific">Sus scrofa</name>
    <name type="common">Pig</name>
    <dbReference type="NCBI Taxonomy" id="9823"/>
    <lineage>
        <taxon>Eukaryota</taxon>
        <taxon>Metazoa</taxon>
        <taxon>Chordata</taxon>
        <taxon>Craniata</taxon>
        <taxon>Vertebrata</taxon>
        <taxon>Euteleostomi</taxon>
        <taxon>Mammalia</taxon>
        <taxon>Eutheria</taxon>
        <taxon>Laurasiatheria</taxon>
        <taxon>Artiodactyla</taxon>
        <taxon>Suina</taxon>
        <taxon>Suidae</taxon>
        <taxon>Sus</taxon>
    </lineage>
</organism>
<dbReference type="EMBL" id="AF031666">
    <property type="protein sequence ID" value="AAC39175.1"/>
    <property type="molecule type" value="mRNA"/>
</dbReference>
<dbReference type="EMBL" id="AF132038">
    <property type="protein sequence ID" value="AAD51137.1"/>
    <property type="molecule type" value="Genomic_DNA"/>
</dbReference>
<dbReference type="RefSeq" id="NP_999003.1">
    <property type="nucleotide sequence ID" value="NM_213838.1"/>
</dbReference>
<dbReference type="SMR" id="O62697"/>
<dbReference type="FunCoup" id="O62697">
    <property type="interactions" value="92"/>
</dbReference>
<dbReference type="STRING" id="9823.ENSSSCP00000025388"/>
<dbReference type="PaxDb" id="9823-ENSSSCP00000022776"/>
<dbReference type="Ensembl" id="ENSSSCT00000024650.4">
    <property type="protein sequence ID" value="ENSSSCP00000025388.1"/>
    <property type="gene ID" value="ENSSSCG00000027555.4"/>
</dbReference>
<dbReference type="Ensembl" id="ENSSSCT00015042039.1">
    <property type="protein sequence ID" value="ENSSSCP00015016609.1"/>
    <property type="gene ID" value="ENSSSCG00015031725.1"/>
</dbReference>
<dbReference type="Ensembl" id="ENSSSCT00025002948.1">
    <property type="protein sequence ID" value="ENSSSCP00025001072.1"/>
    <property type="gene ID" value="ENSSSCG00025002275.1"/>
</dbReference>
<dbReference type="Ensembl" id="ENSSSCT00030057697.1">
    <property type="protein sequence ID" value="ENSSSCP00030026237.1"/>
    <property type="gene ID" value="ENSSSCG00030041522.1"/>
</dbReference>
<dbReference type="Ensembl" id="ENSSSCT00035038414.1">
    <property type="protein sequence ID" value="ENSSSCP00035015332.1"/>
    <property type="gene ID" value="ENSSSCG00035029032.1"/>
</dbReference>
<dbReference type="Ensembl" id="ENSSSCT00040087755.1">
    <property type="protein sequence ID" value="ENSSSCP00040038560.1"/>
    <property type="gene ID" value="ENSSSCG00040064278.1"/>
</dbReference>
<dbReference type="Ensembl" id="ENSSSCT00045008563.1">
    <property type="protein sequence ID" value="ENSSSCP00045005800.1"/>
    <property type="gene ID" value="ENSSSCG00045005153.1"/>
</dbReference>
<dbReference type="Ensembl" id="ENSSSCT00050102899.1">
    <property type="protein sequence ID" value="ENSSSCP00050044903.1"/>
    <property type="gene ID" value="ENSSSCG00050075098.1"/>
</dbReference>
<dbReference type="Ensembl" id="ENSSSCT00055001408.1">
    <property type="protein sequence ID" value="ENSSSCP00055001048.1"/>
    <property type="gene ID" value="ENSSSCG00055000810.1"/>
</dbReference>
<dbReference type="Ensembl" id="ENSSSCT00060015496.1">
    <property type="protein sequence ID" value="ENSSSCP00060006050.1"/>
    <property type="gene ID" value="ENSSSCG00060011864.1"/>
</dbReference>
<dbReference type="Ensembl" id="ENSSSCT00065007949.1">
    <property type="protein sequence ID" value="ENSSSCP00065003347.1"/>
    <property type="gene ID" value="ENSSSCG00065005920.1"/>
</dbReference>
<dbReference type="Ensembl" id="ENSSSCT00070054902.1">
    <property type="protein sequence ID" value="ENSSSCP00070046567.1"/>
    <property type="gene ID" value="ENSSSCG00070027368.1"/>
</dbReference>
<dbReference type="Ensembl" id="ENSSSCT00085030804">
    <property type="protein sequence ID" value="ENSSSCP00085021320"/>
    <property type="gene ID" value="ENSSSCG00085016184"/>
</dbReference>
<dbReference type="Ensembl" id="ENSSSCT00105031098">
    <property type="protein sequence ID" value="ENSSSCP00105021669"/>
    <property type="gene ID" value="ENSSSCG00105016218"/>
</dbReference>
<dbReference type="Ensembl" id="ENSSSCT00110042028">
    <property type="protein sequence ID" value="ENSSSCP00110029516"/>
    <property type="gene ID" value="ENSSSCG00110021705"/>
</dbReference>
<dbReference type="Ensembl" id="ENSSSCT00115011079">
    <property type="protein sequence ID" value="ENSSSCP00115010438"/>
    <property type="gene ID" value="ENSSSCG00115006410"/>
</dbReference>
<dbReference type="Ensembl" id="ENSSSCT00130048775">
    <property type="protein sequence ID" value="ENSSSCP00130034436"/>
    <property type="gene ID" value="ENSSSCG00130025177"/>
</dbReference>
<dbReference type="GeneID" id="396819"/>
<dbReference type="KEGG" id="ssc:396819"/>
<dbReference type="CTD" id="1672"/>
<dbReference type="eggNOG" id="ENOG502SYUI">
    <property type="taxonomic scope" value="Eukaryota"/>
</dbReference>
<dbReference type="GeneTree" id="ENSGT01090000260492"/>
<dbReference type="HOGENOM" id="CLU_189296_4_1_1"/>
<dbReference type="InParanoid" id="O62697"/>
<dbReference type="OMA" id="LRRTKCC"/>
<dbReference type="OrthoDB" id="9623680at2759"/>
<dbReference type="Reactome" id="R-SSC-1461957">
    <property type="pathway name" value="Beta defensins"/>
</dbReference>
<dbReference type="Proteomes" id="UP000008227">
    <property type="component" value="Chromosome 15"/>
</dbReference>
<dbReference type="Proteomes" id="UP000314985">
    <property type="component" value="Chromosome 15"/>
</dbReference>
<dbReference type="Proteomes" id="UP000694570">
    <property type="component" value="Unplaced"/>
</dbReference>
<dbReference type="Proteomes" id="UP000694571">
    <property type="component" value="Unplaced"/>
</dbReference>
<dbReference type="Proteomes" id="UP000694720">
    <property type="component" value="Unplaced"/>
</dbReference>
<dbReference type="Proteomes" id="UP000694722">
    <property type="component" value="Unplaced"/>
</dbReference>
<dbReference type="Proteomes" id="UP000694723">
    <property type="component" value="Unplaced"/>
</dbReference>
<dbReference type="Proteomes" id="UP000694724">
    <property type="component" value="Unplaced"/>
</dbReference>
<dbReference type="Proteomes" id="UP000694725">
    <property type="component" value="Unplaced"/>
</dbReference>
<dbReference type="Proteomes" id="UP000694726">
    <property type="component" value="Unplaced"/>
</dbReference>
<dbReference type="Proteomes" id="UP000694727">
    <property type="component" value="Unplaced"/>
</dbReference>
<dbReference type="Proteomes" id="UP000694728">
    <property type="component" value="Unplaced"/>
</dbReference>
<dbReference type="Bgee" id="ENSSSCG00000027555">
    <property type="expression patterns" value="Expressed in tonsil and 22 other cell types or tissues"/>
</dbReference>
<dbReference type="ExpressionAtlas" id="O62697">
    <property type="expression patterns" value="baseline and differential"/>
</dbReference>
<dbReference type="GO" id="GO:0005615">
    <property type="term" value="C:extracellular space"/>
    <property type="evidence" value="ECO:0000318"/>
    <property type="project" value="GO_Central"/>
</dbReference>
<dbReference type="GO" id="GO:0016020">
    <property type="term" value="C:membrane"/>
    <property type="evidence" value="ECO:0000250"/>
    <property type="project" value="UniProtKB"/>
</dbReference>
<dbReference type="GO" id="GO:1990742">
    <property type="term" value="C:microvesicle"/>
    <property type="evidence" value="ECO:0000250"/>
    <property type="project" value="UniProtKB"/>
</dbReference>
<dbReference type="GO" id="GO:0097225">
    <property type="term" value="C:sperm midpiece"/>
    <property type="evidence" value="ECO:0000250"/>
    <property type="project" value="UniProtKB"/>
</dbReference>
<dbReference type="GO" id="GO:0031731">
    <property type="term" value="F:CCR6 chemokine receptor binding"/>
    <property type="evidence" value="ECO:0000250"/>
    <property type="project" value="UniProtKB"/>
</dbReference>
<dbReference type="GO" id="GO:0042056">
    <property type="term" value="F:chemoattractant activity"/>
    <property type="evidence" value="ECO:0000318"/>
    <property type="project" value="GO_Central"/>
</dbReference>
<dbReference type="GO" id="GO:0042802">
    <property type="term" value="F:identical protein binding"/>
    <property type="evidence" value="ECO:0000250"/>
    <property type="project" value="UniProtKB"/>
</dbReference>
<dbReference type="GO" id="GO:0019722">
    <property type="term" value="P:calcium-mediated signaling"/>
    <property type="evidence" value="ECO:0000250"/>
    <property type="project" value="UniProtKB"/>
</dbReference>
<dbReference type="GO" id="GO:0060326">
    <property type="term" value="P:cell chemotaxis"/>
    <property type="evidence" value="ECO:0000318"/>
    <property type="project" value="GO_Central"/>
</dbReference>
<dbReference type="GO" id="GO:0042742">
    <property type="term" value="P:defense response to bacterium"/>
    <property type="evidence" value="ECO:0000318"/>
    <property type="project" value="GO_Central"/>
</dbReference>
<dbReference type="GO" id="GO:0050829">
    <property type="term" value="P:defense response to Gram-negative bacterium"/>
    <property type="evidence" value="ECO:0000250"/>
    <property type="project" value="UniProtKB"/>
</dbReference>
<dbReference type="GO" id="GO:0050830">
    <property type="term" value="P:defense response to Gram-positive bacterium"/>
    <property type="evidence" value="ECO:0000250"/>
    <property type="project" value="UniProtKB"/>
</dbReference>
<dbReference type="GO" id="GO:0060474">
    <property type="term" value="P:positive regulation of flagellated sperm motility involved in capacitation"/>
    <property type="evidence" value="ECO:0000250"/>
    <property type="project" value="UniProtKB"/>
</dbReference>
<dbReference type="FunFam" id="3.10.360.10:FF:000001">
    <property type="entry name" value="Beta-defensin 1"/>
    <property type="match status" value="1"/>
</dbReference>
<dbReference type="Gene3D" id="3.10.360.10">
    <property type="entry name" value="Antimicrobial Peptide, Beta-defensin 2, Chain A"/>
    <property type="match status" value="1"/>
</dbReference>
<dbReference type="InterPro" id="IPR006080">
    <property type="entry name" value="Beta/alpha-defensin_C"/>
</dbReference>
<dbReference type="InterPro" id="IPR001855">
    <property type="entry name" value="Defensin_beta-like"/>
</dbReference>
<dbReference type="PANTHER" id="PTHR20515">
    <property type="entry name" value="BETA-DEFENSIN"/>
    <property type="match status" value="1"/>
</dbReference>
<dbReference type="PANTHER" id="PTHR20515:SF2">
    <property type="entry name" value="DEFENSIN BETA 4A"/>
    <property type="match status" value="1"/>
</dbReference>
<dbReference type="Pfam" id="PF00711">
    <property type="entry name" value="Defensin_beta"/>
    <property type="match status" value="1"/>
</dbReference>
<dbReference type="SMART" id="SM00048">
    <property type="entry name" value="DEFSN"/>
    <property type="match status" value="1"/>
</dbReference>
<dbReference type="SUPFAM" id="SSF57392">
    <property type="entry name" value="Defensin-like"/>
    <property type="match status" value="1"/>
</dbReference>
<feature type="signal peptide" evidence="3">
    <location>
        <begin position="1"/>
        <end position="20"/>
    </location>
</feature>
<feature type="propeptide" id="PRO_0000006957" evidence="1">
    <location>
        <begin position="21"/>
        <end position="23"/>
    </location>
</feature>
<feature type="peptide" id="PRO_0000006958" description="Beta-defensin 1">
    <location>
        <begin position="24"/>
        <end position="64"/>
    </location>
</feature>
<feature type="disulfide bond" evidence="1">
    <location>
        <begin position="31"/>
        <end position="60"/>
    </location>
</feature>
<feature type="disulfide bond" evidence="1">
    <location>
        <begin position="38"/>
        <end position="53"/>
    </location>
</feature>
<feature type="disulfide bond" evidence="1">
    <location>
        <begin position="43"/>
        <end position="61"/>
    </location>
</feature>
<protein>
    <recommendedName>
        <fullName>Beta-defensin 1</fullName>
        <shortName>BD-1</shortName>
    </recommendedName>
    <alternativeName>
        <fullName>Defensin, beta 1</fullName>
    </alternativeName>
</protein>
<sequence length="64" mass="7066">MRLHRLLLVFLLMVLLPVPGLLKNIGNSVSCLRNKGVCMPGKCAPKMKQIGTCGMPQVKCCKRK</sequence>
<accession>O62697</accession>
<proteinExistence type="inferred from homology"/>